<dbReference type="EC" id="2.3.1.-" evidence="4"/>
<dbReference type="EMBL" id="KU530117">
    <property type="protein sequence ID" value="AND66115.1"/>
    <property type="molecule type" value="Genomic_DNA"/>
</dbReference>
<dbReference type="SMR" id="A0A336U965"/>
<dbReference type="ESTHER" id="aspte-mela">
    <property type="family name" value="Thioesterase"/>
</dbReference>
<dbReference type="VEuPathDB" id="FungiDB:ATEG_03563"/>
<dbReference type="GO" id="GO:0005737">
    <property type="term" value="C:cytoplasm"/>
    <property type="evidence" value="ECO:0007669"/>
    <property type="project" value="UniProtKB-SubCell"/>
</dbReference>
<dbReference type="GO" id="GO:0031177">
    <property type="term" value="F:phosphopantetheine binding"/>
    <property type="evidence" value="ECO:0007669"/>
    <property type="project" value="InterPro"/>
</dbReference>
<dbReference type="GO" id="GO:0016740">
    <property type="term" value="F:transferase activity"/>
    <property type="evidence" value="ECO:0007669"/>
    <property type="project" value="UniProtKB-KW"/>
</dbReference>
<dbReference type="GO" id="GO:0031957">
    <property type="term" value="F:very long-chain fatty acid-CoA ligase activity"/>
    <property type="evidence" value="ECO:0007669"/>
    <property type="project" value="TreeGrafter"/>
</dbReference>
<dbReference type="GO" id="GO:0006633">
    <property type="term" value="P:fatty acid biosynthetic process"/>
    <property type="evidence" value="ECO:0007669"/>
    <property type="project" value="TreeGrafter"/>
</dbReference>
<dbReference type="Gene3D" id="3.30.300.30">
    <property type="match status" value="1"/>
</dbReference>
<dbReference type="Gene3D" id="1.10.1200.10">
    <property type="entry name" value="ACP-like"/>
    <property type="match status" value="1"/>
</dbReference>
<dbReference type="Gene3D" id="3.40.50.1820">
    <property type="entry name" value="alpha/beta hydrolase"/>
    <property type="match status" value="1"/>
</dbReference>
<dbReference type="Gene3D" id="3.40.50.12780">
    <property type="entry name" value="N-terminal domain of ligase-like"/>
    <property type="match status" value="1"/>
</dbReference>
<dbReference type="InterPro" id="IPR029058">
    <property type="entry name" value="AB_hydrolase_fold"/>
</dbReference>
<dbReference type="InterPro" id="IPR036736">
    <property type="entry name" value="ACP-like_sf"/>
</dbReference>
<dbReference type="InterPro" id="IPR045851">
    <property type="entry name" value="AMP-bd_C_sf"/>
</dbReference>
<dbReference type="InterPro" id="IPR020845">
    <property type="entry name" value="AMP-binding_CS"/>
</dbReference>
<dbReference type="InterPro" id="IPR000873">
    <property type="entry name" value="AMP-dep_synth/lig_dom"/>
</dbReference>
<dbReference type="InterPro" id="IPR042099">
    <property type="entry name" value="ANL_N_sf"/>
</dbReference>
<dbReference type="InterPro" id="IPR020806">
    <property type="entry name" value="PKS_PP-bd"/>
</dbReference>
<dbReference type="InterPro" id="IPR009081">
    <property type="entry name" value="PP-bd_ACP"/>
</dbReference>
<dbReference type="InterPro" id="IPR001031">
    <property type="entry name" value="Thioesterase"/>
</dbReference>
<dbReference type="PANTHER" id="PTHR24096">
    <property type="entry name" value="LONG-CHAIN-FATTY-ACID--COA LIGASE"/>
    <property type="match status" value="1"/>
</dbReference>
<dbReference type="PANTHER" id="PTHR24096:SF267">
    <property type="entry name" value="MALONATE--COA LIGASE ACSF3, MITOCHONDRIAL"/>
    <property type="match status" value="1"/>
</dbReference>
<dbReference type="Pfam" id="PF00501">
    <property type="entry name" value="AMP-binding"/>
    <property type="match status" value="1"/>
</dbReference>
<dbReference type="Pfam" id="PF00550">
    <property type="entry name" value="PP-binding"/>
    <property type="match status" value="1"/>
</dbReference>
<dbReference type="Pfam" id="PF00975">
    <property type="entry name" value="Thioesterase"/>
    <property type="match status" value="1"/>
</dbReference>
<dbReference type="SMART" id="SM00823">
    <property type="entry name" value="PKS_PP"/>
    <property type="match status" value="1"/>
</dbReference>
<dbReference type="SUPFAM" id="SSF56801">
    <property type="entry name" value="Acetyl-CoA synthetase-like"/>
    <property type="match status" value="1"/>
</dbReference>
<dbReference type="SUPFAM" id="SSF47336">
    <property type="entry name" value="ACP-like"/>
    <property type="match status" value="1"/>
</dbReference>
<dbReference type="SUPFAM" id="SSF53474">
    <property type="entry name" value="alpha/beta-Hydrolases"/>
    <property type="match status" value="1"/>
</dbReference>
<dbReference type="PROSITE" id="PS00455">
    <property type="entry name" value="AMP_BINDING"/>
    <property type="match status" value="1"/>
</dbReference>
<dbReference type="PROSITE" id="PS50075">
    <property type="entry name" value="CARRIER"/>
    <property type="match status" value="1"/>
</dbReference>
<accession>A0A336U965</accession>
<organism>
    <name type="scientific">Aspergillus terreus</name>
    <dbReference type="NCBI Taxonomy" id="33178"/>
    <lineage>
        <taxon>Eukaryota</taxon>
        <taxon>Fungi</taxon>
        <taxon>Dikarya</taxon>
        <taxon>Ascomycota</taxon>
        <taxon>Pezizomycotina</taxon>
        <taxon>Eurotiomycetes</taxon>
        <taxon>Eurotiomycetidae</taxon>
        <taxon>Eurotiales</taxon>
        <taxon>Aspergillaceae</taxon>
        <taxon>Aspergillus</taxon>
        <taxon>Aspergillus subgen. Circumdati</taxon>
    </lineage>
</organism>
<proteinExistence type="evidence at protein level"/>
<name>MELA_ASPTE</name>
<gene>
    <name evidence="6" type="primary">melA</name>
</gene>
<sequence>MQPSLIPSLLETAAARNGDGRVILYSQGNREDPRSITYRDLLETASKASVAVHNHQNYTPGAAVLLHFNNHLDNIVWFWAVLLAGCIPAITPAFSNNPVQRVANLEHLSSTLITDWCLTSQALLAEFAGQDAIEPVSVETLGWEKASPASNTASVKAKPTDTALLLFTSGSTGKSKAVCLSHFQIVSAIAGKLSVVPLPEQSSFLNWVGLDHVAAIIEIHLQALYADLDQVHVPGSDVISDPIWFLDLMATHRVSRTFAPNFFLARIRDALVQNARSASPRQWDLSGLRYVASGGEANTTKTCDDLSQLLKSFGAPLNVIVPGFGMTETCAGAIFNTNCPDYDKKHGLEYTSVGSCMPGIFMRVTNQQGDPLPPGEMGSLELAGPVVFRQYLNNPAATQESFTMDGWFKTGDCGTLDENGYLVLGGRAKETIIINGVKYSPHEIETAVEEHNIKGLSRSFTCCFSSLSPGAETEEIVLVYLPTYAPEDIPARAATADAISKVVLMSTGSRPHIIPLEQALLPKSTLGKLSRSKIKAAYERGEYRTHDSINRSLIARHRQATRASPKNDFEKGLLEIFLRSFKISEDEFDVQTPIFDVGIDSIELINLKRDIEQHLGFADATIPIIILLENTTVRELAAALDNLYRPKEYNPVVTLQAHGDKNPLWLVHPGAGEVLIFINLAKFITDRPVYALRARGFDEGEKPFDSIEDAVTSYYNGVKSKQPHGPYALAGYCYGSMLAFEVAKKLEENGDEVRFVGSFNLPPHIKMRMRELDWKECLLHLAYFLDLITQKRSRELAVELDGLDQDTILQAIIDEADKERYAQLSLSRPFLSRWADVAYELHRIAGDYDPDGRVASMDVFFSIPLAIAAASKSEWRNVHLSQWDDFTRSHVRFHDVPGEHYSMIGPEHVFAFQKILRSALAERGM</sequence>
<evidence type="ECO:0000255" key="1"/>
<evidence type="ECO:0000255" key="2">
    <source>
        <dbReference type="PROSITE-ProRule" id="PRU00258"/>
    </source>
</evidence>
<evidence type="ECO:0000269" key="3">
    <source>
    </source>
</evidence>
<evidence type="ECO:0000269" key="4">
    <source>
    </source>
</evidence>
<evidence type="ECO:0000269" key="5">
    <source>
    </source>
</evidence>
<evidence type="ECO:0000303" key="6">
    <source>
    </source>
</evidence>
<evidence type="ECO:0000305" key="7"/>
<evidence type="ECO:0000305" key="8">
    <source>
    </source>
</evidence>
<comment type="function">
    <text evidence="3 4 5">Nonribosomal peptide synthase; part of the gene cluster that mediates the biosynthesis of Asp-melanin, a pigment that confers resistance against UV light and hampers phagocytosis by soil amoeba (PubMed:23841722, PubMed:27133313, PubMed:29270299). The nonribosomal peptide synthase melA converts 4-hydroxyphenylpyruvate (4-HPPA) to aspulvinone E (PubMed:27133313, PubMed:29270299). The tyrosinase tyrP then performs hydroxylations of both aromatic moieties of aspulvinone E (PubMed:27133313). The product of tyrP is highly unstable, and, due to the high reactivity of methides and ortho-diquinones, the polymeric Asp-melanin forms spontaneously (PubMed:27133313).</text>
</comment>
<comment type="subcellular location">
    <subcellularLocation>
        <location evidence="5">Cytoplasm</location>
    </subcellularLocation>
</comment>
<comment type="induction">
    <text evidence="4">Expression is induced during conidiation.</text>
</comment>
<comment type="domain">
    <text evidence="4">MelA has a A-T-TE domain architecture. The adenylation (A) domain recognizes and activates the aryl acid substrates, and loads them onto the thiolation (T) domain. The thioesterase (TE) domain shares the missing condensation (C) domain function, and is responsible for condensation and final product release.</text>
</comment>
<comment type="disruption phenotype">
    <text evidence="3 4">Results in white conidia.</text>
</comment>
<comment type="similarity">
    <text evidence="7">Belongs to the ATP-dependent AMP-binding enzyme family.</text>
</comment>
<keyword id="KW-0963">Cytoplasm</keyword>
<keyword id="KW-0596">Phosphopantetheine</keyword>
<keyword id="KW-0597">Phosphoprotein</keyword>
<keyword id="KW-0808">Transferase</keyword>
<feature type="chain" id="PRO_0000448622" description="Aspulvinone E synthetase melA">
    <location>
        <begin position="1"/>
        <end position="925"/>
    </location>
</feature>
<feature type="domain" description="Carrier" evidence="2">
    <location>
        <begin position="564"/>
        <end position="644"/>
    </location>
</feature>
<feature type="region of interest" description="Adenylation (A) domain" evidence="1 8">
    <location>
        <begin position="11"/>
        <end position="434"/>
    </location>
</feature>
<feature type="region of interest" description="Thioesterase (TE) domain" evidence="1 8">
    <location>
        <begin position="663"/>
        <end position="923"/>
    </location>
</feature>
<feature type="modified residue" description="O-(pantetheine 4'-phosphoryl)serine" evidence="2">
    <location>
        <position position="601"/>
    </location>
</feature>
<reference key="1">
    <citation type="journal article" date="2016" name="Cell Chem. Biol.">
        <title>A non-canonical melanin biosynthesis pathway protects Aspergillus terreus conidia from environmental stress.</title>
        <authorList>
            <person name="Geib E."/>
            <person name="Gressler M."/>
            <person name="Viediernikova I."/>
            <person name="Hillmann F."/>
            <person name="Jacobsen I.D."/>
            <person name="Nietzsche S."/>
            <person name="Hertweck C."/>
            <person name="Brock M."/>
        </authorList>
    </citation>
    <scope>NUCLEOTIDE SEQUENCE [GENOMIC DNA]</scope>
    <scope>INDUCTION</scope>
    <scope>DISRUPTION PHENOTYPE</scope>
    <scope>FUNCTION</scope>
    <scope>CATALYTIC ACTIVITY</scope>
    <source>
        <strain>SBUG844</strain>
    </source>
</reference>
<reference key="2">
    <citation type="journal article" date="2013" name="Org. Lett.">
        <title>Application of an efficient gene targeting system linking secondary metabolites to their biosynthetic genes in Aspergillus terreus.</title>
        <authorList>
            <person name="Guo C.J."/>
            <person name="Knox B.P."/>
            <person name="Sanchez J.F."/>
            <person name="Chiang Y.M."/>
            <person name="Bruno K.S."/>
            <person name="Wang C.C."/>
        </authorList>
    </citation>
    <scope>FUNCTION</scope>
    <scope>DISRUPTION PHENOTYPE</scope>
</reference>
<reference key="3">
    <citation type="journal article" date="2017" name="Fungal Biol. Biotechnol.">
        <title>ATNT: an enhanced system for expression of polycistronic secondary metabolite gene clusters in Aspergillus niger.</title>
        <authorList>
            <person name="Geib E."/>
            <person name="Brock M."/>
        </authorList>
    </citation>
    <scope>FUNCTION</scope>
    <scope>CATALYTIC ACTIVITY</scope>
    <scope>SUBCELLULAR LOCATION</scope>
</reference>
<protein>
    <recommendedName>
        <fullName evidence="6">Aspulvinone E synthetase melA</fullName>
        <ecNumber evidence="4">2.3.1.-</ecNumber>
    </recommendedName>
    <alternativeName>
        <fullName evidence="6">Nonribosomal peptide synthetase melA</fullName>
    </alternativeName>
</protein>